<proteinExistence type="inferred from homology"/>
<protein>
    <recommendedName>
        <fullName evidence="1">ATP synthase subunit c</fullName>
    </recommendedName>
    <alternativeName>
        <fullName evidence="1">ATP synthase F(0) sector subunit c</fullName>
    </alternativeName>
    <alternativeName>
        <fullName evidence="1">F-type ATPase subunit c</fullName>
        <shortName evidence="1">F-ATPase subunit c</shortName>
    </alternativeName>
    <alternativeName>
        <fullName evidence="1">Lipid-binding protein</fullName>
    </alternativeName>
</protein>
<name>ATPL_PARMW</name>
<comment type="function">
    <text evidence="1">F(1)F(0) ATP synthase produces ATP from ADP in the presence of a proton or sodium gradient. F-type ATPases consist of two structural domains, F(1) containing the extramembraneous catalytic core and F(0) containing the membrane proton channel, linked together by a central stalk and a peripheral stalk. During catalysis, ATP synthesis in the catalytic domain of F(1) is coupled via a rotary mechanism of the central stalk subunits to proton translocation.</text>
</comment>
<comment type="function">
    <text evidence="1">Key component of the F(0) channel; it plays a direct role in translocation across the membrane. A homomeric c-ring of between 10-14 subunits forms the central stalk rotor element with the F(1) delta and epsilon subunits.</text>
</comment>
<comment type="subunit">
    <text evidence="1">F-type ATPases have 2 components, F(1) - the catalytic core - and F(0) - the membrane proton channel. F(1) has five subunits: alpha(3), beta(3), gamma(1), delta(1), epsilon(1). F(0) has four main subunits: a(1), b(1), b'(1) and c(10-14). The alpha and beta chains form an alternating ring which encloses part of the gamma chain. F(1) is attached to F(0) by a central stalk formed by the gamma and epsilon chains, while a peripheral stalk is formed by the delta, b and b' chains.</text>
</comment>
<comment type="subcellular location">
    <subcellularLocation>
        <location evidence="1">Cellular thylakoid membrane</location>
        <topology evidence="1">Multi-pass membrane protein</topology>
    </subcellularLocation>
</comment>
<comment type="similarity">
    <text evidence="1">Belongs to the ATPase C chain family.</text>
</comment>
<accession>Q7U8W9</accession>
<gene>
    <name evidence="1" type="primary">atpE</name>
    <name evidence="1" type="synonym">atpH</name>
    <name type="ordered locus">SYNW0490</name>
</gene>
<sequence length="82" mass="7971">MDSITSAASVVAAGLAVGLAAIGPGIGQGTASGGAVEGIARQPEAEGKIRGTLLLSLAFMESLTIYGLVVALVLLFANPFAG</sequence>
<feature type="chain" id="PRO_5000096140" description="ATP synthase subunit c">
    <location>
        <begin position="1"/>
        <end position="82"/>
    </location>
</feature>
<feature type="transmembrane region" description="Helical" evidence="1">
    <location>
        <begin position="7"/>
        <end position="27"/>
    </location>
</feature>
<feature type="transmembrane region" description="Helical" evidence="1">
    <location>
        <begin position="57"/>
        <end position="77"/>
    </location>
</feature>
<feature type="site" description="Reversibly protonated during proton transport" evidence="1">
    <location>
        <position position="61"/>
    </location>
</feature>
<reference key="1">
    <citation type="journal article" date="2003" name="Nature">
        <title>The genome of a motile marine Synechococcus.</title>
        <authorList>
            <person name="Palenik B."/>
            <person name="Brahamsha B."/>
            <person name="Larimer F.W."/>
            <person name="Land M.L."/>
            <person name="Hauser L."/>
            <person name="Chain P."/>
            <person name="Lamerdin J.E."/>
            <person name="Regala W."/>
            <person name="Allen E.E."/>
            <person name="McCarren J."/>
            <person name="Paulsen I.T."/>
            <person name="Dufresne A."/>
            <person name="Partensky F."/>
            <person name="Webb E.A."/>
            <person name="Waterbury J."/>
        </authorList>
    </citation>
    <scope>NUCLEOTIDE SEQUENCE [LARGE SCALE GENOMIC DNA]</scope>
    <source>
        <strain>WH8102</strain>
    </source>
</reference>
<evidence type="ECO:0000255" key="1">
    <source>
        <dbReference type="HAMAP-Rule" id="MF_01396"/>
    </source>
</evidence>
<dbReference type="EMBL" id="BX569690">
    <property type="protein sequence ID" value="CAE07005.1"/>
    <property type="molecule type" value="Genomic_DNA"/>
</dbReference>
<dbReference type="RefSeq" id="WP_006851467.1">
    <property type="nucleotide sequence ID" value="NC_005070.1"/>
</dbReference>
<dbReference type="SMR" id="Q7U8W9"/>
<dbReference type="STRING" id="84588.SYNW0490"/>
<dbReference type="KEGG" id="syw:SYNW0490"/>
<dbReference type="eggNOG" id="COG0636">
    <property type="taxonomic scope" value="Bacteria"/>
</dbReference>
<dbReference type="HOGENOM" id="CLU_148047_2_0_3"/>
<dbReference type="Proteomes" id="UP000001422">
    <property type="component" value="Chromosome"/>
</dbReference>
<dbReference type="GO" id="GO:0031676">
    <property type="term" value="C:plasma membrane-derived thylakoid membrane"/>
    <property type="evidence" value="ECO:0007669"/>
    <property type="project" value="UniProtKB-SubCell"/>
</dbReference>
<dbReference type="GO" id="GO:0045259">
    <property type="term" value="C:proton-transporting ATP synthase complex"/>
    <property type="evidence" value="ECO:0007669"/>
    <property type="project" value="UniProtKB-KW"/>
</dbReference>
<dbReference type="GO" id="GO:0033177">
    <property type="term" value="C:proton-transporting two-sector ATPase complex, proton-transporting domain"/>
    <property type="evidence" value="ECO:0007669"/>
    <property type="project" value="InterPro"/>
</dbReference>
<dbReference type="GO" id="GO:0008289">
    <property type="term" value="F:lipid binding"/>
    <property type="evidence" value="ECO:0007669"/>
    <property type="project" value="UniProtKB-KW"/>
</dbReference>
<dbReference type="GO" id="GO:0046933">
    <property type="term" value="F:proton-transporting ATP synthase activity, rotational mechanism"/>
    <property type="evidence" value="ECO:0007669"/>
    <property type="project" value="UniProtKB-UniRule"/>
</dbReference>
<dbReference type="CDD" id="cd18183">
    <property type="entry name" value="ATP-synt_Fo_c_ATPH"/>
    <property type="match status" value="1"/>
</dbReference>
<dbReference type="FunFam" id="1.20.20.10:FF:000001">
    <property type="entry name" value="ATP synthase subunit c, chloroplastic"/>
    <property type="match status" value="1"/>
</dbReference>
<dbReference type="Gene3D" id="1.20.20.10">
    <property type="entry name" value="F1F0 ATP synthase subunit C"/>
    <property type="match status" value="1"/>
</dbReference>
<dbReference type="HAMAP" id="MF_01396">
    <property type="entry name" value="ATP_synth_c_bact"/>
    <property type="match status" value="1"/>
</dbReference>
<dbReference type="InterPro" id="IPR005953">
    <property type="entry name" value="ATP_synth_csu_bac/chlpt"/>
</dbReference>
<dbReference type="InterPro" id="IPR000454">
    <property type="entry name" value="ATP_synth_F0_csu"/>
</dbReference>
<dbReference type="InterPro" id="IPR020537">
    <property type="entry name" value="ATP_synth_F0_csu_DDCD_BS"/>
</dbReference>
<dbReference type="InterPro" id="IPR038662">
    <property type="entry name" value="ATP_synth_F0_csu_sf"/>
</dbReference>
<dbReference type="InterPro" id="IPR002379">
    <property type="entry name" value="ATPase_proteolipid_c-like_dom"/>
</dbReference>
<dbReference type="InterPro" id="IPR035921">
    <property type="entry name" value="F/V-ATP_Csub_sf"/>
</dbReference>
<dbReference type="NCBIfam" id="TIGR01260">
    <property type="entry name" value="ATP_synt_c"/>
    <property type="match status" value="1"/>
</dbReference>
<dbReference type="NCBIfam" id="NF005608">
    <property type="entry name" value="PRK07354.1"/>
    <property type="match status" value="1"/>
</dbReference>
<dbReference type="PANTHER" id="PTHR10031">
    <property type="entry name" value="ATP SYNTHASE LIPID-BINDING PROTEIN, MITOCHONDRIAL"/>
    <property type="match status" value="1"/>
</dbReference>
<dbReference type="PANTHER" id="PTHR10031:SF0">
    <property type="entry name" value="ATPASE PROTEIN 9"/>
    <property type="match status" value="1"/>
</dbReference>
<dbReference type="Pfam" id="PF00137">
    <property type="entry name" value="ATP-synt_C"/>
    <property type="match status" value="1"/>
</dbReference>
<dbReference type="PRINTS" id="PR00124">
    <property type="entry name" value="ATPASEC"/>
</dbReference>
<dbReference type="SUPFAM" id="SSF81333">
    <property type="entry name" value="F1F0 ATP synthase subunit C"/>
    <property type="match status" value="1"/>
</dbReference>
<dbReference type="PROSITE" id="PS00605">
    <property type="entry name" value="ATPASE_C"/>
    <property type="match status" value="1"/>
</dbReference>
<keyword id="KW-0066">ATP synthesis</keyword>
<keyword id="KW-0138">CF(0)</keyword>
<keyword id="KW-0375">Hydrogen ion transport</keyword>
<keyword id="KW-0406">Ion transport</keyword>
<keyword id="KW-0446">Lipid-binding</keyword>
<keyword id="KW-0472">Membrane</keyword>
<keyword id="KW-0793">Thylakoid</keyword>
<keyword id="KW-0812">Transmembrane</keyword>
<keyword id="KW-1133">Transmembrane helix</keyword>
<keyword id="KW-0813">Transport</keyword>
<organism>
    <name type="scientific">Parasynechococcus marenigrum (strain WH8102)</name>
    <dbReference type="NCBI Taxonomy" id="84588"/>
    <lineage>
        <taxon>Bacteria</taxon>
        <taxon>Bacillati</taxon>
        <taxon>Cyanobacteriota</taxon>
        <taxon>Cyanophyceae</taxon>
        <taxon>Synechococcales</taxon>
        <taxon>Prochlorococcaceae</taxon>
        <taxon>Parasynechococcus</taxon>
        <taxon>Parasynechococcus marenigrum</taxon>
    </lineage>
</organism>